<protein>
    <recommendedName>
        <fullName>Multidrug resistance protein NorM</fullName>
    </recommendedName>
    <alternativeName>
        <fullName>Multidrug-efflux transporter</fullName>
    </alternativeName>
    <alternativeName>
        <fullName>Na(+)/drug antiporter</fullName>
    </alternativeName>
</protein>
<accession>Q8D9N8</accession>
<evidence type="ECO:0000250" key="1"/>
<evidence type="ECO:0000255" key="2"/>
<evidence type="ECO:0000305" key="3"/>
<organism>
    <name type="scientific">Vibrio vulnificus (strain CMCP6)</name>
    <dbReference type="NCBI Taxonomy" id="216895"/>
    <lineage>
        <taxon>Bacteria</taxon>
        <taxon>Pseudomonadati</taxon>
        <taxon>Pseudomonadota</taxon>
        <taxon>Gammaproteobacteria</taxon>
        <taxon>Vibrionales</taxon>
        <taxon>Vibrionaceae</taxon>
        <taxon>Vibrio</taxon>
    </lineage>
</organism>
<comment type="function">
    <text evidence="1">Multidrug efflux pump that functions as a Na(+)/drug antiporter.</text>
</comment>
<comment type="subcellular location">
    <subcellularLocation>
        <location evidence="1">Cell inner membrane</location>
        <topology evidence="1">Multi-pass membrane protein</topology>
    </subcellularLocation>
</comment>
<comment type="similarity">
    <text evidence="3">Belongs to the multi antimicrobial extrusion (MATE) (TC 2.A.66.1) family.</text>
</comment>
<comment type="sequence caution" evidence="3">
    <conflict type="erroneous initiation">
        <sequence resource="EMBL-CDS" id="AAO10910"/>
    </conflict>
</comment>
<sequence length="456" mass="49248">MHRYKKEASNLIKLATPVLIASVAQTGMGFVDTVMAGGVSATDMAAVSVAASIWLPSILFGIGLLMALVPVVAQLNGAGKREQVPFEIQQGAVMALLISIPIIGVLFQTQWILGYMNVDAVMATKTIGYIHAVMFAVPAFLLFQTLRSLTDGLSLTKPAMVIGFIGLLLNIPLNWMFVYGKLGAPALGGVGCGVATAIVYWIMFLLLLFYVTTSHRLRQVQLFTTFHPPQLNAQVKLFKLGFPVAAALFFEVTLFAVVALLVAPLGSTVVAAHQVAINFSSLVFMLPMSIGAATSIRVGHMLGEKSTEGARIASHVGILVGLSTAVFTALLTVILREQIALLYTDNRVVITLAMQLLIFTAIYQCTDAIQVIAAGALRGYKDMRAIFNRTFIAYWLLGLPTGYVLGLTDWIVEPMGAQGFWIGFIVGLSSAAAMLGVRLHWLHRQNDEIQLNYEAR</sequence>
<dbReference type="EMBL" id="AE016795">
    <property type="protein sequence ID" value="AAO10910.1"/>
    <property type="status" value="ALT_INIT"/>
    <property type="molecule type" value="Genomic_DNA"/>
</dbReference>
<dbReference type="RefSeq" id="WP_043921033.1">
    <property type="nucleotide sequence ID" value="NC_004459.3"/>
</dbReference>
<dbReference type="SMR" id="Q8D9N8"/>
<dbReference type="KEGG" id="vvu:VV1_2559"/>
<dbReference type="HOGENOM" id="CLU_012893_6_0_6"/>
<dbReference type="Proteomes" id="UP000002275">
    <property type="component" value="Chromosome 1"/>
</dbReference>
<dbReference type="GO" id="GO:0005886">
    <property type="term" value="C:plasma membrane"/>
    <property type="evidence" value="ECO:0007669"/>
    <property type="project" value="UniProtKB-SubCell"/>
</dbReference>
<dbReference type="GO" id="GO:0015297">
    <property type="term" value="F:antiporter activity"/>
    <property type="evidence" value="ECO:0007669"/>
    <property type="project" value="UniProtKB-KW"/>
</dbReference>
<dbReference type="GO" id="GO:0042910">
    <property type="term" value="F:xenobiotic transmembrane transporter activity"/>
    <property type="evidence" value="ECO:0007669"/>
    <property type="project" value="InterPro"/>
</dbReference>
<dbReference type="GO" id="GO:0006814">
    <property type="term" value="P:sodium ion transport"/>
    <property type="evidence" value="ECO:0007669"/>
    <property type="project" value="UniProtKB-KW"/>
</dbReference>
<dbReference type="CDD" id="cd13131">
    <property type="entry name" value="MATE_NorM_like"/>
    <property type="match status" value="1"/>
</dbReference>
<dbReference type="InterPro" id="IPR002528">
    <property type="entry name" value="MATE_fam"/>
</dbReference>
<dbReference type="InterPro" id="IPR050222">
    <property type="entry name" value="MATE_MdtK"/>
</dbReference>
<dbReference type="InterPro" id="IPR048279">
    <property type="entry name" value="MdtK-like"/>
</dbReference>
<dbReference type="NCBIfam" id="TIGR00797">
    <property type="entry name" value="matE"/>
    <property type="match status" value="1"/>
</dbReference>
<dbReference type="PANTHER" id="PTHR43298:SF2">
    <property type="entry name" value="FMN_FAD EXPORTER YEEO-RELATED"/>
    <property type="match status" value="1"/>
</dbReference>
<dbReference type="PANTHER" id="PTHR43298">
    <property type="entry name" value="MULTIDRUG RESISTANCE PROTEIN NORM-RELATED"/>
    <property type="match status" value="1"/>
</dbReference>
<dbReference type="Pfam" id="PF01554">
    <property type="entry name" value="MatE"/>
    <property type="match status" value="2"/>
</dbReference>
<dbReference type="PIRSF" id="PIRSF006603">
    <property type="entry name" value="DinF"/>
    <property type="match status" value="1"/>
</dbReference>
<feature type="chain" id="PRO_0000164247" description="Multidrug resistance protein NorM">
    <location>
        <begin position="1"/>
        <end position="456"/>
    </location>
</feature>
<feature type="transmembrane region" description="Helical" evidence="2">
    <location>
        <begin position="11"/>
        <end position="31"/>
    </location>
</feature>
<feature type="transmembrane region" description="Helical" evidence="2">
    <location>
        <begin position="53"/>
        <end position="73"/>
    </location>
</feature>
<feature type="transmembrane region" description="Helical" evidence="2">
    <location>
        <begin position="93"/>
        <end position="113"/>
    </location>
</feature>
<feature type="transmembrane region" description="Helical" evidence="2">
    <location>
        <begin position="126"/>
        <end position="146"/>
    </location>
</feature>
<feature type="transmembrane region" description="Helical" evidence="2">
    <location>
        <begin position="159"/>
        <end position="179"/>
    </location>
</feature>
<feature type="transmembrane region" description="Helical" evidence="2">
    <location>
        <begin position="189"/>
        <end position="209"/>
    </location>
</feature>
<feature type="transmembrane region" description="Helical" evidence="2">
    <location>
        <begin position="242"/>
        <end position="262"/>
    </location>
</feature>
<feature type="transmembrane region" description="Helical" evidence="2">
    <location>
        <begin position="276"/>
        <end position="296"/>
    </location>
</feature>
<feature type="transmembrane region" description="Helical" evidence="2">
    <location>
        <begin position="315"/>
        <end position="335"/>
    </location>
</feature>
<feature type="transmembrane region" description="Helical" evidence="2">
    <location>
        <begin position="356"/>
        <end position="376"/>
    </location>
</feature>
<feature type="transmembrane region" description="Helical" evidence="2">
    <location>
        <begin position="391"/>
        <end position="411"/>
    </location>
</feature>
<feature type="transmembrane region" description="Helical" evidence="2">
    <location>
        <begin position="417"/>
        <end position="437"/>
    </location>
</feature>
<name>NORM_VIBVU</name>
<gene>
    <name type="primary">norM</name>
    <name type="ordered locus">VV1_2559</name>
</gene>
<proteinExistence type="inferred from homology"/>
<reference key="1">
    <citation type="submission" date="2002-12" db="EMBL/GenBank/DDBJ databases">
        <title>Complete genome sequence of Vibrio vulnificus CMCP6.</title>
        <authorList>
            <person name="Rhee J.H."/>
            <person name="Kim S.Y."/>
            <person name="Chung S.S."/>
            <person name="Kim J.J."/>
            <person name="Moon Y.H."/>
            <person name="Jeong H."/>
            <person name="Choy H.E."/>
        </authorList>
    </citation>
    <scope>NUCLEOTIDE SEQUENCE [LARGE SCALE GENOMIC DNA]</scope>
    <source>
        <strain>CMCP6</strain>
    </source>
</reference>
<keyword id="KW-0050">Antiport</keyword>
<keyword id="KW-0997">Cell inner membrane</keyword>
<keyword id="KW-1003">Cell membrane</keyword>
<keyword id="KW-0406">Ion transport</keyword>
<keyword id="KW-0472">Membrane</keyword>
<keyword id="KW-0915">Sodium</keyword>
<keyword id="KW-0739">Sodium transport</keyword>
<keyword id="KW-0812">Transmembrane</keyword>
<keyword id="KW-1133">Transmembrane helix</keyword>
<keyword id="KW-0813">Transport</keyword>